<comment type="function">
    <text evidence="4">Involved in the regulation of cell proliferation in developing shoots and leaves (PubMed:24854713). Does not possess transactivation activity (PubMed:24854713).</text>
</comment>
<comment type="subunit">
    <text evidence="4 5">Interacts with GIF1.</text>
</comment>
<comment type="subcellular location">
    <subcellularLocation>
        <location evidence="2">Nucleus</location>
    </subcellularLocation>
</comment>
<comment type="tissue specificity">
    <text evidence="4 6">Highly expressed in shoots (PubMed:24854713, Ref.1). Expressed in developing leaves (PubMed:24854713, Ref.1).</text>
</comment>
<comment type="domain">
    <text evidence="8">The QLQ domain and WRC domain may be involved in protein-protein interaction and DNA-binding, respectively.</text>
</comment>
<comment type="miscellaneous">
    <text evidence="4">Plants over-expressing GRF10 exhibit reduced leaf size and plant height.</text>
</comment>
<comment type="similarity">
    <text evidence="8">Belongs to the GRF family.</text>
</comment>
<comment type="caution">
    <text evidence="4">Lacks the whole C-terminal region found in the GRF family, and therefore lacks transactivation activity.</text>
</comment>
<sequence length="269" mass="28541">MTAEGEAKNPSAGGGGDNPQHQQAAPAPAPAQGEVAQEAAVQGTGQEQERDKADREVQGGAGEKDDGACRDLVLVEDPEVLAVEDPEEAAATAALQEEMKALVASIPDGAGAAFTAMQLQELEQQSRVYQYMAARVPVPTHLVFPVWKSVTGASSEGAQKYPTLMGLATLCLDFGKNPEPEPGRCRRTDGKKWRCWRNTIPNEKYCERHMHRGRKRPVQVFLEDDEPDSASGSKPAAPGKATEGAKKADDKSPSSKKLAVAAPAAVQST</sequence>
<proteinExistence type="evidence at protein level"/>
<protein>
    <recommendedName>
        <fullName evidence="7">GRF-interacting factor 10</fullName>
        <shortName evidence="7">ZmGRF10</shortName>
    </recommendedName>
</protein>
<name>GRF10_MAIZE</name>
<feature type="chain" id="PRO_0000445648" description="GRF-interacting factor 10">
    <location>
        <begin position="1"/>
        <end position="269"/>
    </location>
</feature>
<feature type="domain" description="QLQ" evidence="1">
    <location>
        <begin position="113"/>
        <end position="148"/>
    </location>
</feature>
<feature type="domain" description="WRC" evidence="2">
    <location>
        <begin position="179"/>
        <end position="223"/>
    </location>
</feature>
<feature type="region of interest" description="Disordered" evidence="3">
    <location>
        <begin position="1"/>
        <end position="71"/>
    </location>
</feature>
<feature type="region of interest" description="Disordered" evidence="3">
    <location>
        <begin position="217"/>
        <end position="269"/>
    </location>
</feature>
<feature type="short sequence motif" description="Bipartite nuclear localization signal" evidence="2">
    <location>
        <begin position="184"/>
        <end position="194"/>
    </location>
</feature>
<feature type="short sequence motif" description="Bipartite nuclear localization signal" evidence="2">
    <location>
        <begin position="212"/>
        <end position="216"/>
    </location>
</feature>
<feature type="compositionally biased region" description="Low complexity" evidence="3">
    <location>
        <begin position="22"/>
        <end position="43"/>
    </location>
</feature>
<feature type="compositionally biased region" description="Basic and acidic residues" evidence="3">
    <location>
        <begin position="47"/>
        <end position="69"/>
    </location>
</feature>
<feature type="compositionally biased region" description="Basic and acidic residues" evidence="3">
    <location>
        <begin position="243"/>
        <end position="253"/>
    </location>
</feature>
<accession>A5HEG9</accession>
<dbReference type="EMBL" id="EF515849">
    <property type="protein sequence ID" value="ABQ01223.1"/>
    <property type="molecule type" value="mRNA"/>
</dbReference>
<dbReference type="EMBL" id="KJ726874">
    <property type="protein sequence ID" value="AIB04365.1"/>
    <property type="molecule type" value="mRNA"/>
</dbReference>
<dbReference type="EMBL" id="CM007650">
    <property type="protein sequence ID" value="ONM56958.1"/>
    <property type="molecule type" value="Genomic_DNA"/>
</dbReference>
<dbReference type="EMBL" id="EU960601">
    <property type="protein sequence ID" value="ACG32719.1"/>
    <property type="molecule type" value="mRNA"/>
</dbReference>
<dbReference type="EMBL" id="BT042513">
    <property type="protein sequence ID" value="ACF87518.1"/>
    <property type="molecule type" value="mRNA"/>
</dbReference>
<dbReference type="EMBL" id="BT087437">
    <property type="protein sequence ID" value="ACR37790.1"/>
    <property type="molecule type" value="mRNA"/>
</dbReference>
<dbReference type="RefSeq" id="NP_001106028.1">
    <property type="nucleotide sequence ID" value="NM_001112558.1"/>
</dbReference>
<dbReference type="FunCoup" id="A5HEG9">
    <property type="interactions" value="1111"/>
</dbReference>
<dbReference type="IntAct" id="A5HEG9">
    <property type="interactions" value="1"/>
</dbReference>
<dbReference type="STRING" id="4577.A5HEG9"/>
<dbReference type="PaxDb" id="4577-GRMZM2G096709_P01"/>
<dbReference type="EnsemblPlants" id="Zm00001eb320200_T001">
    <property type="protein sequence ID" value="Zm00001eb320200_P001"/>
    <property type="gene ID" value="Zm00001eb320200"/>
</dbReference>
<dbReference type="GeneID" id="100101542"/>
<dbReference type="Gramene" id="Zm00001eb320200_T001">
    <property type="protein sequence ID" value="Zm00001eb320200_P001"/>
    <property type="gene ID" value="Zm00001eb320200"/>
</dbReference>
<dbReference type="KEGG" id="zma:100101542"/>
<dbReference type="eggNOG" id="ENOG502SJBU">
    <property type="taxonomic scope" value="Eukaryota"/>
</dbReference>
<dbReference type="HOGENOM" id="CLU_1028230_0_0_1"/>
<dbReference type="InParanoid" id="A5HEG9"/>
<dbReference type="OMA" id="HCFAVIV"/>
<dbReference type="OrthoDB" id="1927209at2759"/>
<dbReference type="Proteomes" id="UP000007305">
    <property type="component" value="Chromosome 7"/>
</dbReference>
<dbReference type="ExpressionAtlas" id="A5HEG9">
    <property type="expression patterns" value="baseline and differential"/>
</dbReference>
<dbReference type="GO" id="GO:0005634">
    <property type="term" value="C:nucleus"/>
    <property type="evidence" value="ECO:0007669"/>
    <property type="project" value="UniProtKB-SubCell"/>
</dbReference>
<dbReference type="GO" id="GO:0005524">
    <property type="term" value="F:ATP binding"/>
    <property type="evidence" value="ECO:0007669"/>
    <property type="project" value="InterPro"/>
</dbReference>
<dbReference type="GO" id="GO:0008283">
    <property type="term" value="P:cell population proliferation"/>
    <property type="evidence" value="ECO:0000315"/>
    <property type="project" value="UniProtKB"/>
</dbReference>
<dbReference type="GO" id="GO:0006351">
    <property type="term" value="P:DNA-templated transcription"/>
    <property type="evidence" value="ECO:0007669"/>
    <property type="project" value="InterPro"/>
</dbReference>
<dbReference type="GO" id="GO:0048366">
    <property type="term" value="P:leaf development"/>
    <property type="evidence" value="ECO:0000315"/>
    <property type="project" value="UniProtKB"/>
</dbReference>
<dbReference type="GO" id="GO:0006355">
    <property type="term" value="P:regulation of DNA-templated transcription"/>
    <property type="evidence" value="ECO:0007669"/>
    <property type="project" value="InterPro"/>
</dbReference>
<dbReference type="InterPro" id="IPR014978">
    <property type="entry name" value="Gln-Leu-Gln_QLQ"/>
</dbReference>
<dbReference type="InterPro" id="IPR031137">
    <property type="entry name" value="GRF"/>
</dbReference>
<dbReference type="InterPro" id="IPR014977">
    <property type="entry name" value="WRC_dom"/>
</dbReference>
<dbReference type="PANTHER" id="PTHR31602:SF14">
    <property type="entry name" value="GROWTH-REGULATING FACTOR 11"/>
    <property type="match status" value="1"/>
</dbReference>
<dbReference type="PANTHER" id="PTHR31602">
    <property type="entry name" value="GROWTH-REGULATING FACTOR 5"/>
    <property type="match status" value="1"/>
</dbReference>
<dbReference type="Pfam" id="PF08880">
    <property type="entry name" value="QLQ"/>
    <property type="match status" value="1"/>
</dbReference>
<dbReference type="Pfam" id="PF08879">
    <property type="entry name" value="WRC"/>
    <property type="match status" value="1"/>
</dbReference>
<dbReference type="SMART" id="SM00951">
    <property type="entry name" value="QLQ"/>
    <property type="match status" value="1"/>
</dbReference>
<dbReference type="PROSITE" id="PS51666">
    <property type="entry name" value="QLQ"/>
    <property type="match status" value="1"/>
</dbReference>
<dbReference type="PROSITE" id="PS51667">
    <property type="entry name" value="WRC"/>
    <property type="match status" value="1"/>
</dbReference>
<gene>
    <name evidence="7" type="primary">GRF10</name>
    <name evidence="9" type="ORF">ZEAMMB73_Zm00001d021362</name>
</gene>
<keyword id="KW-0539">Nucleus</keyword>
<keyword id="KW-1185">Reference proteome</keyword>
<organism>
    <name type="scientific">Zea mays</name>
    <name type="common">Maize</name>
    <dbReference type="NCBI Taxonomy" id="4577"/>
    <lineage>
        <taxon>Eukaryota</taxon>
        <taxon>Viridiplantae</taxon>
        <taxon>Streptophyta</taxon>
        <taxon>Embryophyta</taxon>
        <taxon>Tracheophyta</taxon>
        <taxon>Spermatophyta</taxon>
        <taxon>Magnoliopsida</taxon>
        <taxon>Liliopsida</taxon>
        <taxon>Poales</taxon>
        <taxon>Poaceae</taxon>
        <taxon>PACMAD clade</taxon>
        <taxon>Panicoideae</taxon>
        <taxon>Andropogonodae</taxon>
        <taxon>Andropogoneae</taxon>
        <taxon>Tripsacinae</taxon>
        <taxon>Zea</taxon>
    </lineage>
</organism>
<reference key="1">
    <citation type="journal article" date="2008" name="Plant Sci.">
        <title>Isolation and characterization of genes encoding GRF transcription factors and GIF transcriptional coactivators in Maize (Zea mays L.).</title>
        <authorList>
            <person name="Zhang D.F."/>
            <person name="Li B."/>
            <person name="Jia G.Q."/>
            <person name="Zhang T.F."/>
            <person name="Dai J.R."/>
            <person name="Li J.S."/>
            <person name="Wang S.C."/>
        </authorList>
        <dbReference type="AGRICOLA" id="IND44119307"/>
    </citation>
    <scope>NUCLEOTIDE SEQUENCE [MRNA]</scope>
    <scope>TISSUE SPECIFICITY</scope>
</reference>
<reference key="2">
    <citation type="submission" date="2014-04" db="EMBL/GenBank/DDBJ databases">
        <title>The Maize TFome - Development of a transcription factor open reading frame collection for functional genomics.</title>
        <authorList>
            <person name="Burdo B."/>
            <person name="Gray J."/>
            <person name="Goetting-Minesky M.P."/>
            <person name="Wittler B."/>
            <person name="Hunt M."/>
            <person name="Li T."/>
            <person name="Velliquette D."/>
            <person name="Thomas J."/>
            <person name="Gentzel I."/>
            <person name="Dos Santos Brito M."/>
            <person name="Mejia-Guerra M.K."/>
            <person name="Connolly L.N."/>
            <person name="Qaisi D."/>
            <person name="Li W."/>
            <person name="Casas M.I."/>
            <person name="Doseff A.I."/>
            <person name="Grotewold E."/>
        </authorList>
    </citation>
    <scope>NUCLEOTIDE SEQUENCE [MRNA]</scope>
</reference>
<reference key="3">
    <citation type="journal article" date="2009" name="Science">
        <title>The B73 maize genome: complexity, diversity, and dynamics.</title>
        <authorList>
            <person name="Schnable P.S."/>
            <person name="Ware D."/>
            <person name="Fulton R.S."/>
            <person name="Stein J.C."/>
            <person name="Wei F."/>
            <person name="Pasternak S."/>
            <person name="Liang C."/>
            <person name="Zhang J."/>
            <person name="Fulton L."/>
            <person name="Graves T.A."/>
            <person name="Minx P."/>
            <person name="Reily A.D."/>
            <person name="Courtney L."/>
            <person name="Kruchowski S.S."/>
            <person name="Tomlinson C."/>
            <person name="Strong C."/>
            <person name="Delehaunty K."/>
            <person name="Fronick C."/>
            <person name="Courtney B."/>
            <person name="Rock S.M."/>
            <person name="Belter E."/>
            <person name="Du F."/>
            <person name="Kim K."/>
            <person name="Abbott R.M."/>
            <person name="Cotton M."/>
            <person name="Levy A."/>
            <person name="Marchetto P."/>
            <person name="Ochoa K."/>
            <person name="Jackson S.M."/>
            <person name="Gillam B."/>
            <person name="Chen W."/>
            <person name="Yan L."/>
            <person name="Higginbotham J."/>
            <person name="Cardenas M."/>
            <person name="Waligorski J."/>
            <person name="Applebaum E."/>
            <person name="Phelps L."/>
            <person name="Falcone J."/>
            <person name="Kanchi K."/>
            <person name="Thane T."/>
            <person name="Scimone A."/>
            <person name="Thane N."/>
            <person name="Henke J."/>
            <person name="Wang T."/>
            <person name="Ruppert J."/>
            <person name="Shah N."/>
            <person name="Rotter K."/>
            <person name="Hodges J."/>
            <person name="Ingenthron E."/>
            <person name="Cordes M."/>
            <person name="Kohlberg S."/>
            <person name="Sgro J."/>
            <person name="Delgado B."/>
            <person name="Mead K."/>
            <person name="Chinwalla A."/>
            <person name="Leonard S."/>
            <person name="Crouse K."/>
            <person name="Collura K."/>
            <person name="Kudrna D."/>
            <person name="Currie J."/>
            <person name="He R."/>
            <person name="Angelova A."/>
            <person name="Rajasekar S."/>
            <person name="Mueller T."/>
            <person name="Lomeli R."/>
            <person name="Scara G."/>
            <person name="Ko A."/>
            <person name="Delaney K."/>
            <person name="Wissotski M."/>
            <person name="Lopez G."/>
            <person name="Campos D."/>
            <person name="Braidotti M."/>
            <person name="Ashley E."/>
            <person name="Golser W."/>
            <person name="Kim H."/>
            <person name="Lee S."/>
            <person name="Lin J."/>
            <person name="Dujmic Z."/>
            <person name="Kim W."/>
            <person name="Talag J."/>
            <person name="Zuccolo A."/>
            <person name="Fan C."/>
            <person name="Sebastian A."/>
            <person name="Kramer M."/>
            <person name="Spiegel L."/>
            <person name="Nascimento L."/>
            <person name="Zutavern T."/>
            <person name="Miller B."/>
            <person name="Ambroise C."/>
            <person name="Muller S."/>
            <person name="Spooner W."/>
            <person name="Narechania A."/>
            <person name="Ren L."/>
            <person name="Wei S."/>
            <person name="Kumari S."/>
            <person name="Faga B."/>
            <person name="Levy M.J."/>
            <person name="McMahan L."/>
            <person name="Van Buren P."/>
            <person name="Vaughn M.W."/>
            <person name="Ying K."/>
            <person name="Yeh C.-T."/>
            <person name="Emrich S.J."/>
            <person name="Jia Y."/>
            <person name="Kalyanaraman A."/>
            <person name="Hsia A.-P."/>
            <person name="Barbazuk W.B."/>
            <person name="Baucom R.S."/>
            <person name="Brutnell T.P."/>
            <person name="Carpita N.C."/>
            <person name="Chaparro C."/>
            <person name="Chia J.-M."/>
            <person name="Deragon J.-M."/>
            <person name="Estill J.C."/>
            <person name="Fu Y."/>
            <person name="Jeddeloh J.A."/>
            <person name="Han Y."/>
            <person name="Lee H."/>
            <person name="Li P."/>
            <person name="Lisch D.R."/>
            <person name="Liu S."/>
            <person name="Liu Z."/>
            <person name="Nagel D.H."/>
            <person name="McCann M.C."/>
            <person name="SanMiguel P."/>
            <person name="Myers A.M."/>
            <person name="Nettleton D."/>
            <person name="Nguyen J."/>
            <person name="Penning B.W."/>
            <person name="Ponnala L."/>
            <person name="Schneider K.L."/>
            <person name="Schwartz D.C."/>
            <person name="Sharma A."/>
            <person name="Soderlund C."/>
            <person name="Springer N.M."/>
            <person name="Sun Q."/>
            <person name="Wang H."/>
            <person name="Waterman M."/>
            <person name="Westerman R."/>
            <person name="Wolfgruber T.K."/>
            <person name="Yang L."/>
            <person name="Yu Y."/>
            <person name="Zhang L."/>
            <person name="Zhou S."/>
            <person name="Zhu Q."/>
            <person name="Bennetzen J.L."/>
            <person name="Dawe R.K."/>
            <person name="Jiang J."/>
            <person name="Jiang N."/>
            <person name="Presting G.G."/>
            <person name="Wessler S.R."/>
            <person name="Aluru S."/>
            <person name="Martienssen R.A."/>
            <person name="Clifton S.W."/>
            <person name="McCombie W.R."/>
            <person name="Wing R.A."/>
            <person name="Wilson R.K."/>
        </authorList>
    </citation>
    <scope>NUCLEOTIDE SEQUENCE [LARGE SCALE GENOMIC DNA]</scope>
    <source>
        <strain>cv. B73</strain>
    </source>
</reference>
<reference key="4">
    <citation type="journal article" date="2009" name="Plant Mol. Biol.">
        <title>Insights into corn genes derived from large-scale cDNA sequencing.</title>
        <authorList>
            <person name="Alexandrov N.N."/>
            <person name="Brover V.V."/>
            <person name="Freidin S."/>
            <person name="Troukhan M.E."/>
            <person name="Tatarinova T.V."/>
            <person name="Zhang H."/>
            <person name="Swaller T.J."/>
            <person name="Lu Y.-P."/>
            <person name="Bouck J."/>
            <person name="Flavell R.B."/>
            <person name="Feldmann K.A."/>
        </authorList>
    </citation>
    <scope>NUCLEOTIDE SEQUENCE [LARGE SCALE MRNA]</scope>
</reference>
<reference key="5">
    <citation type="journal article" date="2009" name="PLoS Genet.">
        <title>Sequencing, mapping, and analysis of 27,455 maize full-length cDNAs.</title>
        <authorList>
            <person name="Soderlund C."/>
            <person name="Descour A."/>
            <person name="Kudrna D."/>
            <person name="Bomhoff M."/>
            <person name="Boyd L."/>
            <person name="Currie J."/>
            <person name="Angelova A."/>
            <person name="Collura K."/>
            <person name="Wissotski M."/>
            <person name="Ashley E."/>
            <person name="Morrow D."/>
            <person name="Fernandes J."/>
            <person name="Walbot V."/>
            <person name="Yu Y."/>
        </authorList>
    </citation>
    <scope>NUCLEOTIDE SEQUENCE [LARGE SCALE MRNA]</scope>
    <source>
        <strain>cv. B73</strain>
    </source>
</reference>
<reference key="6">
    <citation type="journal article" date="2014" name="J. Integr. Plant Biol.">
        <title>Overexpression of the maize GRF10, an endogenous truncated growth-regulating factor protein, leads to reduction in leaf size and plant height.</title>
        <authorList>
            <person name="Wu L."/>
            <person name="Zhang D."/>
            <person name="Xue M."/>
            <person name="Qian J."/>
            <person name="He Y."/>
            <person name="Wang S."/>
        </authorList>
    </citation>
    <scope>FUNCTION</scope>
    <scope>INTERACTION WITH GIF1</scope>
    <scope>TISSUE SPECIFICITY</scope>
</reference>
<reference key="7">
    <citation type="journal article" date="2018" name="Plant Cell">
        <title>GRF-interacting factor1 regulates shoot architecture and meristem determinacy in maize.</title>
        <authorList>
            <person name="Zhang D."/>
            <person name="Sun W."/>
            <person name="Singh R."/>
            <person name="Zheng Y."/>
            <person name="Cao Z."/>
            <person name="Li M."/>
            <person name="Lunde C."/>
            <person name="Hake S."/>
            <person name="Zhang Z."/>
        </authorList>
    </citation>
    <scope>INTERACTION WITH GIF1</scope>
</reference>
<evidence type="ECO:0000255" key="1">
    <source>
        <dbReference type="PROSITE-ProRule" id="PRU01001"/>
    </source>
</evidence>
<evidence type="ECO:0000255" key="2">
    <source>
        <dbReference type="PROSITE-ProRule" id="PRU01002"/>
    </source>
</evidence>
<evidence type="ECO:0000256" key="3">
    <source>
        <dbReference type="SAM" id="MobiDB-lite"/>
    </source>
</evidence>
<evidence type="ECO:0000269" key="4">
    <source>
    </source>
</evidence>
<evidence type="ECO:0000269" key="5">
    <source>
    </source>
</evidence>
<evidence type="ECO:0000269" key="6">
    <source ref="1"/>
</evidence>
<evidence type="ECO:0000303" key="7">
    <source ref="1"/>
</evidence>
<evidence type="ECO:0000305" key="8"/>
<evidence type="ECO:0000312" key="9">
    <source>
        <dbReference type="EMBL" id="ONM56958.1"/>
    </source>
</evidence>